<feature type="chain" id="PRO_0000273775" description="Large ribosomal subunit protein uL30">
    <location>
        <begin position="1"/>
        <end position="61"/>
    </location>
</feature>
<comment type="subunit">
    <text evidence="1">Part of the 50S ribosomal subunit.</text>
</comment>
<comment type="similarity">
    <text evidence="1">Belongs to the universal ribosomal protein uL30 family.</text>
</comment>
<proteinExistence type="inferred from homology"/>
<gene>
    <name evidence="1" type="primary">rpmD</name>
    <name type="ordered locus">Cgl0541</name>
    <name type="ordered locus">cg0632</name>
</gene>
<evidence type="ECO:0000255" key="1">
    <source>
        <dbReference type="HAMAP-Rule" id="MF_01371"/>
    </source>
</evidence>
<evidence type="ECO:0000305" key="2"/>
<dbReference type="EMBL" id="BA000036">
    <property type="protein sequence ID" value="BAB97935.1"/>
    <property type="molecule type" value="Genomic_DNA"/>
</dbReference>
<dbReference type="EMBL" id="BX927149">
    <property type="protein sequence ID" value="CAF19249.1"/>
    <property type="molecule type" value="Genomic_DNA"/>
</dbReference>
<dbReference type="RefSeq" id="NP_599780.1">
    <property type="nucleotide sequence ID" value="NC_003450.3"/>
</dbReference>
<dbReference type="RefSeq" id="WP_003860590.1">
    <property type="nucleotide sequence ID" value="NC_006958.1"/>
</dbReference>
<dbReference type="SMR" id="Q8NSX3"/>
<dbReference type="STRING" id="196627.cg0632"/>
<dbReference type="GeneID" id="1021542"/>
<dbReference type="KEGG" id="cgb:cg0632"/>
<dbReference type="KEGG" id="cgl:Cgl0541"/>
<dbReference type="PATRIC" id="fig|196627.13.peg.535"/>
<dbReference type="eggNOG" id="COG1841">
    <property type="taxonomic scope" value="Bacteria"/>
</dbReference>
<dbReference type="HOGENOM" id="CLU_131047_2_0_11"/>
<dbReference type="OrthoDB" id="9812790at2"/>
<dbReference type="BioCyc" id="CORYNE:G18NG-10104-MONOMER"/>
<dbReference type="Proteomes" id="UP000000582">
    <property type="component" value="Chromosome"/>
</dbReference>
<dbReference type="Proteomes" id="UP000001009">
    <property type="component" value="Chromosome"/>
</dbReference>
<dbReference type="GO" id="GO:0022625">
    <property type="term" value="C:cytosolic large ribosomal subunit"/>
    <property type="evidence" value="ECO:0007669"/>
    <property type="project" value="TreeGrafter"/>
</dbReference>
<dbReference type="GO" id="GO:0003735">
    <property type="term" value="F:structural constituent of ribosome"/>
    <property type="evidence" value="ECO:0007669"/>
    <property type="project" value="InterPro"/>
</dbReference>
<dbReference type="GO" id="GO:0006412">
    <property type="term" value="P:translation"/>
    <property type="evidence" value="ECO:0007669"/>
    <property type="project" value="UniProtKB-UniRule"/>
</dbReference>
<dbReference type="CDD" id="cd01658">
    <property type="entry name" value="Ribosomal_L30"/>
    <property type="match status" value="1"/>
</dbReference>
<dbReference type="Gene3D" id="3.30.1390.20">
    <property type="entry name" value="Ribosomal protein L30, ferredoxin-like fold domain"/>
    <property type="match status" value="1"/>
</dbReference>
<dbReference type="HAMAP" id="MF_01371_B">
    <property type="entry name" value="Ribosomal_uL30_B"/>
    <property type="match status" value="1"/>
</dbReference>
<dbReference type="InterPro" id="IPR036919">
    <property type="entry name" value="Ribo_uL30_ferredoxin-like_sf"/>
</dbReference>
<dbReference type="InterPro" id="IPR005996">
    <property type="entry name" value="Ribosomal_uL30_bac-type"/>
</dbReference>
<dbReference type="InterPro" id="IPR016082">
    <property type="entry name" value="Ribosomal_uL30_ferredoxin-like"/>
</dbReference>
<dbReference type="NCBIfam" id="TIGR01308">
    <property type="entry name" value="rpmD_bact"/>
    <property type="match status" value="1"/>
</dbReference>
<dbReference type="PANTHER" id="PTHR15892:SF2">
    <property type="entry name" value="LARGE RIBOSOMAL SUBUNIT PROTEIN UL30M"/>
    <property type="match status" value="1"/>
</dbReference>
<dbReference type="PANTHER" id="PTHR15892">
    <property type="entry name" value="MITOCHONDRIAL RIBOSOMAL PROTEIN L30"/>
    <property type="match status" value="1"/>
</dbReference>
<dbReference type="Pfam" id="PF00327">
    <property type="entry name" value="Ribosomal_L30"/>
    <property type="match status" value="1"/>
</dbReference>
<dbReference type="PIRSF" id="PIRSF002211">
    <property type="entry name" value="Ribosomal_L30_bac-type"/>
    <property type="match status" value="1"/>
</dbReference>
<dbReference type="SUPFAM" id="SSF55129">
    <property type="entry name" value="Ribosomal protein L30p/L7e"/>
    <property type="match status" value="1"/>
</dbReference>
<keyword id="KW-1185">Reference proteome</keyword>
<keyword id="KW-0687">Ribonucleoprotein</keyword>
<keyword id="KW-0689">Ribosomal protein</keyword>
<sequence>MALKITQIKGTVGTKPKHRENLRSLGLKRIRHTVIRPDTPEVRGMILAVRHLIVVEEVAGE</sequence>
<organism>
    <name type="scientific">Corynebacterium glutamicum (strain ATCC 13032 / DSM 20300 / JCM 1318 / BCRC 11384 / CCUG 27702 / LMG 3730 / NBRC 12168 / NCIMB 10025 / NRRL B-2784 / 534)</name>
    <dbReference type="NCBI Taxonomy" id="196627"/>
    <lineage>
        <taxon>Bacteria</taxon>
        <taxon>Bacillati</taxon>
        <taxon>Actinomycetota</taxon>
        <taxon>Actinomycetes</taxon>
        <taxon>Mycobacteriales</taxon>
        <taxon>Corynebacteriaceae</taxon>
        <taxon>Corynebacterium</taxon>
    </lineage>
</organism>
<name>RL30_CORGL</name>
<accession>Q8NSX3</accession>
<accession>Q6M7K9</accession>
<protein>
    <recommendedName>
        <fullName evidence="1">Large ribosomal subunit protein uL30</fullName>
    </recommendedName>
    <alternativeName>
        <fullName evidence="2">50S ribosomal protein L30</fullName>
    </alternativeName>
</protein>
<reference key="1">
    <citation type="journal article" date="2003" name="Appl. Microbiol. Biotechnol.">
        <title>The Corynebacterium glutamicum genome: features and impacts on biotechnological processes.</title>
        <authorList>
            <person name="Ikeda M."/>
            <person name="Nakagawa S."/>
        </authorList>
    </citation>
    <scope>NUCLEOTIDE SEQUENCE [LARGE SCALE GENOMIC DNA]</scope>
    <source>
        <strain>ATCC 13032 / DSM 20300 / JCM 1318 / BCRC 11384 / CCUG 27702 / LMG 3730 / NBRC 12168 / NCIMB 10025 / NRRL B-2784 / 534</strain>
    </source>
</reference>
<reference key="2">
    <citation type="journal article" date="2003" name="J. Biotechnol.">
        <title>The complete Corynebacterium glutamicum ATCC 13032 genome sequence and its impact on the production of L-aspartate-derived amino acids and vitamins.</title>
        <authorList>
            <person name="Kalinowski J."/>
            <person name="Bathe B."/>
            <person name="Bartels D."/>
            <person name="Bischoff N."/>
            <person name="Bott M."/>
            <person name="Burkovski A."/>
            <person name="Dusch N."/>
            <person name="Eggeling L."/>
            <person name="Eikmanns B.J."/>
            <person name="Gaigalat L."/>
            <person name="Goesmann A."/>
            <person name="Hartmann M."/>
            <person name="Huthmacher K."/>
            <person name="Kraemer R."/>
            <person name="Linke B."/>
            <person name="McHardy A.C."/>
            <person name="Meyer F."/>
            <person name="Moeckel B."/>
            <person name="Pfefferle W."/>
            <person name="Puehler A."/>
            <person name="Rey D.A."/>
            <person name="Rueckert C."/>
            <person name="Rupp O."/>
            <person name="Sahm H."/>
            <person name="Wendisch V.F."/>
            <person name="Wiegraebe I."/>
            <person name="Tauch A."/>
        </authorList>
    </citation>
    <scope>NUCLEOTIDE SEQUENCE [LARGE SCALE GENOMIC DNA]</scope>
    <source>
        <strain>ATCC 13032 / DSM 20300 / JCM 1318 / BCRC 11384 / CCUG 27702 / LMG 3730 / NBRC 12168 / NCIMB 10025 / NRRL B-2784 / 534</strain>
    </source>
</reference>